<accession>A0PRE5</accession>
<comment type="function">
    <text evidence="1">Part of the Sec protein translocase complex. Interacts with the SecYEG preprotein conducting channel. Has a central role in coupling the hydrolysis of ATP to the transfer of proteins into and across the cell membrane, serving as an ATP-driven molecular motor driving the stepwise translocation of polypeptide chains across the membrane.</text>
</comment>
<comment type="catalytic activity">
    <reaction evidence="1">
        <text>ATP + H2O + cellular proteinSide 1 = ADP + phosphate + cellular proteinSide 2.</text>
        <dbReference type="EC" id="7.4.2.8"/>
    </reaction>
</comment>
<comment type="subunit">
    <text evidence="1">Monomer and homodimer. Part of the essential Sec protein translocation apparatus which comprises SecA, SecYEG and auxiliary proteins SecDF. Other proteins may also be involved.</text>
</comment>
<comment type="subcellular location">
    <subcellularLocation>
        <location evidence="1">Cell membrane</location>
        <topology evidence="1">Peripheral membrane protein</topology>
        <orientation evidence="1">Cytoplasmic side</orientation>
    </subcellularLocation>
    <subcellularLocation>
        <location evidence="1">Cytoplasm</location>
    </subcellularLocation>
    <text evidence="1">Distribution is 50-50.</text>
</comment>
<comment type="similarity">
    <text evidence="1">Belongs to the SecA family.</text>
</comment>
<protein>
    <recommendedName>
        <fullName evidence="1">Protein translocase subunit SecA 1</fullName>
        <ecNumber evidence="1">7.4.2.8</ecNumber>
    </recommendedName>
</protein>
<evidence type="ECO:0000255" key="1">
    <source>
        <dbReference type="HAMAP-Rule" id="MF_01382"/>
    </source>
</evidence>
<evidence type="ECO:0000256" key="2">
    <source>
        <dbReference type="SAM" id="MobiDB-lite"/>
    </source>
</evidence>
<name>SECA1_MYCUA</name>
<sequence length="950" mass="106326">MLSKLLRVGEGRMVKRLKKVADYVESLSGDVEKLTDAELRAKTDEFKKRHAEGESLDELLPEAFAVAREAAWRVLGQRPFEVQLMGAAALHLGNVAEMKTGEGKTLTSVLPAYLNGIGGKGVHIVTVNDYLAKRDSEWMGRVHRFLGLDVGVILAQMTPEERRVAYNADITYGTNNEFGFDYLRDNMAHTLDDCVQRGHNFVIVDEVDSILIDEARTPLIISGPADGSSNWYTEFARLAPLMEKDTHYEVDLRKRTVGVHELGVEFVEDQLGIDNLYEAANSPLVSYLNNALKAKELFNRDKDYIVRNGEVLIVDEFTGRVLIGRRYSEGMHQAIEAKEHVEIKAENQTLATITLQNYFRLYNKHAGMTGTAQTEAAELHEIYKLGVVPIPTNRPMVREDQSDLIYKTEEAKYIAVVDDVAERYEKGQPVLIGTTSVERSEYLSRQFTKRRIPHNVLNAKYHEQEAGIIAEAGRRGAITVATNMAGRGTDIVLGGNVDFLTDKRLRDNGLDPVETPDEYEQAWHQELPKVKEEAGDEATEVIKAGGLYVLGTERHESRRIDNQLRGRSGRQGDPGESRFYLSLGDELMRRFNGAALESLLTRLNLPDDVPIEAKMVTRAIKSAQTQVEQQNFEVRKNVLKYDEVMNQQRKVIYAERRRILEGENLQQQVKDMLTDVITAYVDGATVEGYAEDWDLDALWTALKTLYPVGIKTDTLMRRDQDSDRDDLTRDELLQALLQDADQAYAAREAELEELAGEGAMRQLERNVLLNVIDRKWREHLYEMDYLKEGIGLRAMAQRDPLVEYQREGYDMFMAMLDGVKEESVGFLFNVSVEAVPAPQVEVAPVAEPEDLAEFATAAAAAAQEGGAGRKNAAAREEAPSRLRAKGIEDESPALTYSGPSEDGSAQVQRNGGGAAKTPAGVPAGRSRRERREAARRQGRGAKPPKSVKKR</sequence>
<keyword id="KW-0067">ATP-binding</keyword>
<keyword id="KW-1003">Cell membrane</keyword>
<keyword id="KW-0963">Cytoplasm</keyword>
<keyword id="KW-0472">Membrane</keyword>
<keyword id="KW-0547">Nucleotide-binding</keyword>
<keyword id="KW-0653">Protein transport</keyword>
<keyword id="KW-1278">Translocase</keyword>
<keyword id="KW-0811">Translocation</keyword>
<keyword id="KW-0813">Transport</keyword>
<dbReference type="EC" id="7.4.2.8" evidence="1"/>
<dbReference type="EMBL" id="CP000325">
    <property type="protein sequence ID" value="ABL04914.1"/>
    <property type="molecule type" value="Genomic_DNA"/>
</dbReference>
<dbReference type="RefSeq" id="WP_011740529.1">
    <property type="nucleotide sequence ID" value="NC_008611.1"/>
</dbReference>
<dbReference type="SMR" id="A0PRE5"/>
<dbReference type="KEGG" id="mul:MUL_2576"/>
<dbReference type="eggNOG" id="COG0653">
    <property type="taxonomic scope" value="Bacteria"/>
</dbReference>
<dbReference type="HOGENOM" id="CLU_005314_3_0_11"/>
<dbReference type="Proteomes" id="UP000000765">
    <property type="component" value="Chromosome"/>
</dbReference>
<dbReference type="GO" id="GO:0031522">
    <property type="term" value="C:cell envelope Sec protein transport complex"/>
    <property type="evidence" value="ECO:0007669"/>
    <property type="project" value="TreeGrafter"/>
</dbReference>
<dbReference type="GO" id="GO:0005829">
    <property type="term" value="C:cytosol"/>
    <property type="evidence" value="ECO:0007669"/>
    <property type="project" value="TreeGrafter"/>
</dbReference>
<dbReference type="GO" id="GO:0005886">
    <property type="term" value="C:plasma membrane"/>
    <property type="evidence" value="ECO:0007669"/>
    <property type="project" value="UniProtKB-SubCell"/>
</dbReference>
<dbReference type="GO" id="GO:0005524">
    <property type="term" value="F:ATP binding"/>
    <property type="evidence" value="ECO:0007669"/>
    <property type="project" value="UniProtKB-UniRule"/>
</dbReference>
<dbReference type="GO" id="GO:0008564">
    <property type="term" value="F:protein-exporting ATPase activity"/>
    <property type="evidence" value="ECO:0007669"/>
    <property type="project" value="UniProtKB-EC"/>
</dbReference>
<dbReference type="GO" id="GO:0065002">
    <property type="term" value="P:intracellular protein transmembrane transport"/>
    <property type="evidence" value="ECO:0007669"/>
    <property type="project" value="UniProtKB-UniRule"/>
</dbReference>
<dbReference type="GO" id="GO:0017038">
    <property type="term" value="P:protein import"/>
    <property type="evidence" value="ECO:0007669"/>
    <property type="project" value="InterPro"/>
</dbReference>
<dbReference type="GO" id="GO:0006605">
    <property type="term" value="P:protein targeting"/>
    <property type="evidence" value="ECO:0007669"/>
    <property type="project" value="UniProtKB-UniRule"/>
</dbReference>
<dbReference type="GO" id="GO:0043952">
    <property type="term" value="P:protein transport by the Sec complex"/>
    <property type="evidence" value="ECO:0007669"/>
    <property type="project" value="TreeGrafter"/>
</dbReference>
<dbReference type="CDD" id="cd17928">
    <property type="entry name" value="DEXDc_SecA"/>
    <property type="match status" value="1"/>
</dbReference>
<dbReference type="CDD" id="cd18803">
    <property type="entry name" value="SF2_C_secA"/>
    <property type="match status" value="1"/>
</dbReference>
<dbReference type="FunFam" id="1.10.3060.10:FF:000002">
    <property type="entry name" value="Preprotein translocase subunit SecA"/>
    <property type="match status" value="1"/>
</dbReference>
<dbReference type="FunFam" id="3.40.50.300:FF:000113">
    <property type="entry name" value="Preprotein translocase subunit SecA"/>
    <property type="match status" value="1"/>
</dbReference>
<dbReference type="FunFam" id="3.40.50.300:FF:000334">
    <property type="entry name" value="Protein translocase subunit SecA"/>
    <property type="match status" value="1"/>
</dbReference>
<dbReference type="FunFam" id="3.90.1440.10:FF:000002">
    <property type="entry name" value="Protein translocase subunit SecA"/>
    <property type="match status" value="1"/>
</dbReference>
<dbReference type="Gene3D" id="1.10.3060.10">
    <property type="entry name" value="Helical scaffold and wing domains of SecA"/>
    <property type="match status" value="1"/>
</dbReference>
<dbReference type="Gene3D" id="3.40.50.300">
    <property type="entry name" value="P-loop containing nucleotide triphosphate hydrolases"/>
    <property type="match status" value="2"/>
</dbReference>
<dbReference type="Gene3D" id="3.90.1440.10">
    <property type="entry name" value="SecA, preprotein cross-linking domain"/>
    <property type="match status" value="1"/>
</dbReference>
<dbReference type="HAMAP" id="MF_01382">
    <property type="entry name" value="SecA"/>
    <property type="match status" value="1"/>
</dbReference>
<dbReference type="InterPro" id="IPR014001">
    <property type="entry name" value="Helicase_ATP-bd"/>
</dbReference>
<dbReference type="InterPro" id="IPR001650">
    <property type="entry name" value="Helicase_C-like"/>
</dbReference>
<dbReference type="InterPro" id="IPR027417">
    <property type="entry name" value="P-loop_NTPase"/>
</dbReference>
<dbReference type="InterPro" id="IPR000185">
    <property type="entry name" value="SecA"/>
</dbReference>
<dbReference type="InterPro" id="IPR020937">
    <property type="entry name" value="SecA_CS"/>
</dbReference>
<dbReference type="InterPro" id="IPR011115">
    <property type="entry name" value="SecA_DEAD"/>
</dbReference>
<dbReference type="InterPro" id="IPR014018">
    <property type="entry name" value="SecA_motor_DEAD"/>
</dbReference>
<dbReference type="InterPro" id="IPR011130">
    <property type="entry name" value="SecA_preprotein_X-link_dom"/>
</dbReference>
<dbReference type="InterPro" id="IPR044722">
    <property type="entry name" value="SecA_SF2_C"/>
</dbReference>
<dbReference type="InterPro" id="IPR011116">
    <property type="entry name" value="SecA_Wing/Scaffold"/>
</dbReference>
<dbReference type="InterPro" id="IPR036266">
    <property type="entry name" value="SecA_Wing/Scaffold_sf"/>
</dbReference>
<dbReference type="InterPro" id="IPR036670">
    <property type="entry name" value="SecA_X-link_sf"/>
</dbReference>
<dbReference type="NCBIfam" id="NF009538">
    <property type="entry name" value="PRK12904.1"/>
    <property type="match status" value="1"/>
</dbReference>
<dbReference type="NCBIfam" id="TIGR00963">
    <property type="entry name" value="secA"/>
    <property type="match status" value="1"/>
</dbReference>
<dbReference type="PANTHER" id="PTHR30612:SF0">
    <property type="entry name" value="CHLOROPLAST PROTEIN-TRANSPORTING ATPASE"/>
    <property type="match status" value="1"/>
</dbReference>
<dbReference type="PANTHER" id="PTHR30612">
    <property type="entry name" value="SECA INNER MEMBRANE COMPONENT OF SEC PROTEIN SECRETION SYSTEM"/>
    <property type="match status" value="1"/>
</dbReference>
<dbReference type="Pfam" id="PF21090">
    <property type="entry name" value="P-loop_SecA"/>
    <property type="match status" value="1"/>
</dbReference>
<dbReference type="Pfam" id="PF07517">
    <property type="entry name" value="SecA_DEAD"/>
    <property type="match status" value="1"/>
</dbReference>
<dbReference type="Pfam" id="PF01043">
    <property type="entry name" value="SecA_PP_bind"/>
    <property type="match status" value="1"/>
</dbReference>
<dbReference type="Pfam" id="PF07516">
    <property type="entry name" value="SecA_SW"/>
    <property type="match status" value="1"/>
</dbReference>
<dbReference type="PRINTS" id="PR00906">
    <property type="entry name" value="SECA"/>
</dbReference>
<dbReference type="SMART" id="SM00957">
    <property type="entry name" value="SecA_DEAD"/>
    <property type="match status" value="1"/>
</dbReference>
<dbReference type="SMART" id="SM00958">
    <property type="entry name" value="SecA_PP_bind"/>
    <property type="match status" value="1"/>
</dbReference>
<dbReference type="SUPFAM" id="SSF81886">
    <property type="entry name" value="Helical scaffold and wing domains of SecA"/>
    <property type="match status" value="1"/>
</dbReference>
<dbReference type="SUPFAM" id="SSF52540">
    <property type="entry name" value="P-loop containing nucleoside triphosphate hydrolases"/>
    <property type="match status" value="2"/>
</dbReference>
<dbReference type="SUPFAM" id="SSF81767">
    <property type="entry name" value="Pre-protein crosslinking domain of SecA"/>
    <property type="match status" value="1"/>
</dbReference>
<dbReference type="PROSITE" id="PS01312">
    <property type="entry name" value="SECA"/>
    <property type="match status" value="1"/>
</dbReference>
<dbReference type="PROSITE" id="PS51196">
    <property type="entry name" value="SECA_MOTOR_DEAD"/>
    <property type="match status" value="1"/>
</dbReference>
<gene>
    <name evidence="1" type="primary">secA1</name>
    <name type="ordered locus">MUL_2576</name>
</gene>
<organism>
    <name type="scientific">Mycobacterium ulcerans (strain Agy99)</name>
    <dbReference type="NCBI Taxonomy" id="362242"/>
    <lineage>
        <taxon>Bacteria</taxon>
        <taxon>Bacillati</taxon>
        <taxon>Actinomycetota</taxon>
        <taxon>Actinomycetes</taxon>
        <taxon>Mycobacteriales</taxon>
        <taxon>Mycobacteriaceae</taxon>
        <taxon>Mycobacterium</taxon>
        <taxon>Mycobacterium ulcerans group</taxon>
    </lineage>
</organism>
<proteinExistence type="inferred from homology"/>
<reference key="1">
    <citation type="journal article" date="2007" name="Genome Res.">
        <title>Reductive evolution and niche adaptation inferred from the genome of Mycobacterium ulcerans, the causative agent of Buruli ulcer.</title>
        <authorList>
            <person name="Stinear T.P."/>
            <person name="Seemann T."/>
            <person name="Pidot S."/>
            <person name="Frigui W."/>
            <person name="Reysset G."/>
            <person name="Garnier T."/>
            <person name="Meurice G."/>
            <person name="Simon D."/>
            <person name="Bouchier C."/>
            <person name="Ma L."/>
            <person name="Tichit M."/>
            <person name="Porter J.L."/>
            <person name="Ryan J."/>
            <person name="Johnson P.D.R."/>
            <person name="Davies J.K."/>
            <person name="Jenkin G.A."/>
            <person name="Small P.L.C."/>
            <person name="Jones L.M."/>
            <person name="Tekaia F."/>
            <person name="Laval F."/>
            <person name="Daffe M."/>
            <person name="Parkhill J."/>
            <person name="Cole S.T."/>
        </authorList>
    </citation>
    <scope>NUCLEOTIDE SEQUENCE [LARGE SCALE GENOMIC DNA]</scope>
    <source>
        <strain>Agy99</strain>
    </source>
</reference>
<feature type="chain" id="PRO_0000318392" description="Protein translocase subunit SecA 1">
    <location>
        <begin position="1"/>
        <end position="950"/>
    </location>
</feature>
<feature type="region of interest" description="Disordered" evidence="2">
    <location>
        <begin position="864"/>
        <end position="950"/>
    </location>
</feature>
<feature type="compositionally biased region" description="Basic and acidic residues" evidence="2">
    <location>
        <begin position="873"/>
        <end position="888"/>
    </location>
</feature>
<feature type="binding site" evidence="1">
    <location>
        <position position="83"/>
    </location>
    <ligand>
        <name>ATP</name>
        <dbReference type="ChEBI" id="CHEBI:30616"/>
    </ligand>
</feature>
<feature type="binding site" evidence="1">
    <location>
        <begin position="101"/>
        <end position="105"/>
    </location>
    <ligand>
        <name>ATP</name>
        <dbReference type="ChEBI" id="CHEBI:30616"/>
    </ligand>
</feature>
<feature type="binding site" evidence="1">
    <location>
        <position position="490"/>
    </location>
    <ligand>
        <name>ATP</name>
        <dbReference type="ChEBI" id="CHEBI:30616"/>
    </ligand>
</feature>